<accession>B9E9K1</accession>
<dbReference type="EMBL" id="AP009484">
    <property type="protein sequence ID" value="BAH16912.1"/>
    <property type="molecule type" value="Genomic_DNA"/>
</dbReference>
<dbReference type="RefSeq" id="WP_012656116.1">
    <property type="nucleotide sequence ID" value="NC_011999.1"/>
</dbReference>
<dbReference type="SMR" id="B9E9K1"/>
<dbReference type="STRING" id="458233.MCCL_0205"/>
<dbReference type="KEGG" id="mcl:MCCL_0205"/>
<dbReference type="eggNOG" id="COG0093">
    <property type="taxonomic scope" value="Bacteria"/>
</dbReference>
<dbReference type="HOGENOM" id="CLU_095071_2_1_9"/>
<dbReference type="OrthoDB" id="9806379at2"/>
<dbReference type="Proteomes" id="UP000001383">
    <property type="component" value="Chromosome"/>
</dbReference>
<dbReference type="GO" id="GO:0022625">
    <property type="term" value="C:cytosolic large ribosomal subunit"/>
    <property type="evidence" value="ECO:0007669"/>
    <property type="project" value="TreeGrafter"/>
</dbReference>
<dbReference type="GO" id="GO:0070180">
    <property type="term" value="F:large ribosomal subunit rRNA binding"/>
    <property type="evidence" value="ECO:0007669"/>
    <property type="project" value="TreeGrafter"/>
</dbReference>
<dbReference type="GO" id="GO:0003735">
    <property type="term" value="F:structural constituent of ribosome"/>
    <property type="evidence" value="ECO:0007669"/>
    <property type="project" value="InterPro"/>
</dbReference>
<dbReference type="GO" id="GO:0006412">
    <property type="term" value="P:translation"/>
    <property type="evidence" value="ECO:0007669"/>
    <property type="project" value="UniProtKB-UniRule"/>
</dbReference>
<dbReference type="CDD" id="cd00337">
    <property type="entry name" value="Ribosomal_uL14"/>
    <property type="match status" value="1"/>
</dbReference>
<dbReference type="FunFam" id="2.40.150.20:FF:000001">
    <property type="entry name" value="50S ribosomal protein L14"/>
    <property type="match status" value="1"/>
</dbReference>
<dbReference type="Gene3D" id="2.40.150.20">
    <property type="entry name" value="Ribosomal protein L14"/>
    <property type="match status" value="1"/>
</dbReference>
<dbReference type="HAMAP" id="MF_01367">
    <property type="entry name" value="Ribosomal_uL14"/>
    <property type="match status" value="1"/>
</dbReference>
<dbReference type="InterPro" id="IPR000218">
    <property type="entry name" value="Ribosomal_uL14"/>
</dbReference>
<dbReference type="InterPro" id="IPR005745">
    <property type="entry name" value="Ribosomal_uL14_bac-type"/>
</dbReference>
<dbReference type="InterPro" id="IPR019972">
    <property type="entry name" value="Ribosomal_uL14_CS"/>
</dbReference>
<dbReference type="InterPro" id="IPR036853">
    <property type="entry name" value="Ribosomal_uL14_sf"/>
</dbReference>
<dbReference type="NCBIfam" id="TIGR01067">
    <property type="entry name" value="rplN_bact"/>
    <property type="match status" value="1"/>
</dbReference>
<dbReference type="PANTHER" id="PTHR11761">
    <property type="entry name" value="50S/60S RIBOSOMAL PROTEIN L14/L23"/>
    <property type="match status" value="1"/>
</dbReference>
<dbReference type="PANTHER" id="PTHR11761:SF3">
    <property type="entry name" value="LARGE RIBOSOMAL SUBUNIT PROTEIN UL14M"/>
    <property type="match status" value="1"/>
</dbReference>
<dbReference type="Pfam" id="PF00238">
    <property type="entry name" value="Ribosomal_L14"/>
    <property type="match status" value="1"/>
</dbReference>
<dbReference type="SMART" id="SM01374">
    <property type="entry name" value="Ribosomal_L14"/>
    <property type="match status" value="1"/>
</dbReference>
<dbReference type="SUPFAM" id="SSF50193">
    <property type="entry name" value="Ribosomal protein L14"/>
    <property type="match status" value="1"/>
</dbReference>
<dbReference type="PROSITE" id="PS00049">
    <property type="entry name" value="RIBOSOMAL_L14"/>
    <property type="match status" value="1"/>
</dbReference>
<comment type="function">
    <text evidence="1">Binds to 23S rRNA. Forms part of two intersubunit bridges in the 70S ribosome.</text>
</comment>
<comment type="subunit">
    <text evidence="1">Part of the 50S ribosomal subunit. Forms a cluster with proteins L3 and L19. In the 70S ribosome, L14 and L19 interact and together make contacts with the 16S rRNA in bridges B5 and B8.</text>
</comment>
<comment type="similarity">
    <text evidence="1">Belongs to the universal ribosomal protein uL14 family.</text>
</comment>
<name>RL14_MACCJ</name>
<organism>
    <name type="scientific">Macrococcus caseolyticus (strain JCSC5402)</name>
    <name type="common">Macrococcoides caseolyticum</name>
    <dbReference type="NCBI Taxonomy" id="458233"/>
    <lineage>
        <taxon>Bacteria</taxon>
        <taxon>Bacillati</taxon>
        <taxon>Bacillota</taxon>
        <taxon>Bacilli</taxon>
        <taxon>Bacillales</taxon>
        <taxon>Staphylococcaceae</taxon>
        <taxon>Macrococcoides</taxon>
    </lineage>
</organism>
<protein>
    <recommendedName>
        <fullName evidence="1">Large ribosomal subunit protein uL14</fullName>
    </recommendedName>
    <alternativeName>
        <fullName evidence="2">50S ribosomal protein L14</fullName>
    </alternativeName>
</protein>
<proteinExistence type="inferred from homology"/>
<gene>
    <name evidence="1" type="primary">rplN</name>
    <name type="ordered locus">MCCL_0205</name>
</gene>
<feature type="chain" id="PRO_1000166927" description="Large ribosomal subunit protein uL14">
    <location>
        <begin position="1"/>
        <end position="122"/>
    </location>
</feature>
<reference key="1">
    <citation type="journal article" date="2009" name="J. Bacteriol.">
        <title>Complete genome sequence of Macrococcus caseolyticus strain JCSCS5402, reflecting the ancestral genome of the human-pathogenic staphylococci.</title>
        <authorList>
            <person name="Baba T."/>
            <person name="Kuwahara-Arai K."/>
            <person name="Uchiyama I."/>
            <person name="Takeuchi F."/>
            <person name="Ito T."/>
            <person name="Hiramatsu K."/>
        </authorList>
    </citation>
    <scope>NUCLEOTIDE SEQUENCE [LARGE SCALE GENOMIC DNA]</scope>
    <source>
        <strain>JCSC5402</strain>
    </source>
</reference>
<evidence type="ECO:0000255" key="1">
    <source>
        <dbReference type="HAMAP-Rule" id="MF_01367"/>
    </source>
</evidence>
<evidence type="ECO:0000305" key="2"/>
<keyword id="KW-1185">Reference proteome</keyword>
<keyword id="KW-0687">Ribonucleoprotein</keyword>
<keyword id="KW-0689">Ribosomal protein</keyword>
<keyword id="KW-0694">RNA-binding</keyword>
<keyword id="KW-0699">rRNA-binding</keyword>
<sequence>MIQQESRLKVADNSGAREVLTIKVLGGSGRKTANIGDVIVCTVKNATPGGVVKKGEVVKAVIVRTKSGVRRNDGSYIKFDENACVIIRDDKGPRGTRIFGPVARELREGNFMKIVSLAPEVL</sequence>